<comment type="function">
    <text evidence="1">ATPase which is responsible for recognizing, binding, unfolding and translocation of pupylated proteins into the bacterial 20S proteasome core particle. May be essential for opening the gate of the 20S proteasome via an interaction with its C-terminus, thereby allowing substrate entry and access to the site of proteolysis. Thus, the C-termini of the proteasomal ATPase may function like a 'key in a lock' to induce gate opening and therefore regulate proteolysis.</text>
</comment>
<comment type="pathway">
    <text evidence="1">Protein degradation; proteasomal Pup-dependent pathway.</text>
</comment>
<comment type="subunit">
    <text evidence="1">Homohexamer. Assembles into a hexameric ring structure that caps the 20S proteasome core. Strongly interacts with the prokaryotic ubiquitin-like protein Pup through a hydrophobic interface; the interacting region of ARC lies in its N-terminal coiled-coil domain. There is one Pup binding site per ARC hexamer ring. Upon ATP-binding, the C-terminus of ARC interacts with the alpha-rings of the proteasome core, possibly by binding to the intersubunit pockets.</text>
</comment>
<comment type="domain">
    <text evidence="1">Consists of three main regions, an N-terminal coiled-coil domain that binds to protein Pup and functions as a docking station, an interdomain involved in ARC hexamerization, and a C-terminal ATPase domain of the AAA type.</text>
</comment>
<comment type="similarity">
    <text evidence="1">Belongs to the AAA ATPase family.</text>
</comment>
<dbReference type="EMBL" id="CP000611">
    <property type="protein sequence ID" value="ABQ73891.1"/>
    <property type="molecule type" value="Genomic_DNA"/>
</dbReference>
<dbReference type="SMR" id="A5U4E1"/>
<dbReference type="KEGG" id="mra:MRA_2130"/>
<dbReference type="eggNOG" id="COG1222">
    <property type="taxonomic scope" value="Bacteria"/>
</dbReference>
<dbReference type="HOGENOM" id="CLU_036054_0_0_11"/>
<dbReference type="UniPathway" id="UPA00997"/>
<dbReference type="Proteomes" id="UP000001988">
    <property type="component" value="Chromosome"/>
</dbReference>
<dbReference type="GO" id="GO:0000502">
    <property type="term" value="C:proteasome complex"/>
    <property type="evidence" value="ECO:0007669"/>
    <property type="project" value="UniProtKB-KW"/>
</dbReference>
<dbReference type="GO" id="GO:0005524">
    <property type="term" value="F:ATP binding"/>
    <property type="evidence" value="ECO:0007669"/>
    <property type="project" value="UniProtKB-UniRule"/>
</dbReference>
<dbReference type="GO" id="GO:0016887">
    <property type="term" value="F:ATP hydrolysis activity"/>
    <property type="evidence" value="ECO:0007669"/>
    <property type="project" value="UniProtKB-UniRule"/>
</dbReference>
<dbReference type="GO" id="GO:0019941">
    <property type="term" value="P:modification-dependent protein catabolic process"/>
    <property type="evidence" value="ECO:0007669"/>
    <property type="project" value="InterPro"/>
</dbReference>
<dbReference type="GO" id="GO:0010498">
    <property type="term" value="P:proteasomal protein catabolic process"/>
    <property type="evidence" value="ECO:0007669"/>
    <property type="project" value="InterPro"/>
</dbReference>
<dbReference type="FunFam" id="1.10.8.60:FF:000122">
    <property type="entry name" value="AAA ATPase forming ring-shaped complexes"/>
    <property type="match status" value="1"/>
</dbReference>
<dbReference type="FunFam" id="1.20.5.170:FF:000018">
    <property type="entry name" value="AAA ATPase forming ring-shaped complexes"/>
    <property type="match status" value="1"/>
</dbReference>
<dbReference type="FunFam" id="2.40.50.140:FF:000169">
    <property type="entry name" value="AAA ATPase forming ring-shaped complexes"/>
    <property type="match status" value="1"/>
</dbReference>
<dbReference type="FunFam" id="3.40.50.300:FF:000155">
    <property type="entry name" value="AAA ATPase forming ring-shaped complexes"/>
    <property type="match status" value="1"/>
</dbReference>
<dbReference type="Gene3D" id="1.10.8.60">
    <property type="match status" value="1"/>
</dbReference>
<dbReference type="Gene3D" id="1.20.5.170">
    <property type="match status" value="1"/>
</dbReference>
<dbReference type="Gene3D" id="2.40.50.140">
    <property type="entry name" value="Nucleic acid-binding proteins"/>
    <property type="match status" value="2"/>
</dbReference>
<dbReference type="Gene3D" id="3.40.50.300">
    <property type="entry name" value="P-loop containing nucleotide triphosphate hydrolases"/>
    <property type="match status" value="1"/>
</dbReference>
<dbReference type="HAMAP" id="MF_02112">
    <property type="entry name" value="ARC_ATPase"/>
    <property type="match status" value="1"/>
</dbReference>
<dbReference type="InterPro" id="IPR003593">
    <property type="entry name" value="AAA+_ATPase"/>
</dbReference>
<dbReference type="InterPro" id="IPR050168">
    <property type="entry name" value="AAA_ATPase_domain"/>
</dbReference>
<dbReference type="InterPro" id="IPR003959">
    <property type="entry name" value="ATPase_AAA_core"/>
</dbReference>
<dbReference type="InterPro" id="IPR003960">
    <property type="entry name" value="ATPase_AAA_CS"/>
</dbReference>
<dbReference type="InterPro" id="IPR012340">
    <property type="entry name" value="NA-bd_OB-fold"/>
</dbReference>
<dbReference type="InterPro" id="IPR027417">
    <property type="entry name" value="P-loop_NTPase"/>
</dbReference>
<dbReference type="InterPro" id="IPR032501">
    <property type="entry name" value="Prot_ATP_ID_OB_2nd"/>
</dbReference>
<dbReference type="InterPro" id="IPR041626">
    <property type="entry name" value="Prot_ATP_ID_OB_N"/>
</dbReference>
<dbReference type="InterPro" id="IPR022482">
    <property type="entry name" value="Proteasome_ATPase"/>
</dbReference>
<dbReference type="NCBIfam" id="TIGR03689">
    <property type="entry name" value="pup_AAA"/>
    <property type="match status" value="1"/>
</dbReference>
<dbReference type="PANTHER" id="PTHR23077">
    <property type="entry name" value="AAA-FAMILY ATPASE"/>
    <property type="match status" value="1"/>
</dbReference>
<dbReference type="PANTHER" id="PTHR23077:SF144">
    <property type="entry name" value="PROTEASOME-ASSOCIATED ATPASE"/>
    <property type="match status" value="1"/>
</dbReference>
<dbReference type="Pfam" id="PF00004">
    <property type="entry name" value="AAA"/>
    <property type="match status" value="1"/>
</dbReference>
<dbReference type="Pfam" id="PF16450">
    <property type="entry name" value="Prot_ATP_ID_OB_C"/>
    <property type="match status" value="1"/>
</dbReference>
<dbReference type="Pfam" id="PF17758">
    <property type="entry name" value="Prot_ATP_ID_OB_N"/>
    <property type="match status" value="1"/>
</dbReference>
<dbReference type="SMART" id="SM00382">
    <property type="entry name" value="AAA"/>
    <property type="match status" value="1"/>
</dbReference>
<dbReference type="SUPFAM" id="SSF52540">
    <property type="entry name" value="P-loop containing nucleoside triphosphate hydrolases"/>
    <property type="match status" value="1"/>
</dbReference>
<dbReference type="PROSITE" id="PS00674">
    <property type="entry name" value="AAA"/>
    <property type="match status" value="1"/>
</dbReference>
<protein>
    <recommendedName>
        <fullName evidence="1">Proteasome-associated ATPase</fullName>
    </recommendedName>
    <alternativeName>
        <fullName evidence="1">AAA ATPase forming ring-shaped complexes</fullName>
        <shortName evidence="1">ARC</shortName>
    </alternativeName>
    <alternativeName>
        <fullName evidence="1">Mycobacterial proteasome ATPase</fullName>
    </alternativeName>
</protein>
<name>ARC_MYCTA</name>
<sequence>MGESERSEAFGIPRDSPLSSGDAAELEQLRREAAVLREQLENAVGSHAPTRSARDIHQLEARIDSLAARNSKLMETLKEARQQLLALREEVDRLGQPPSGYGVLLATHDDDTVDVFTSGRKMRLTCSPNIDAASLKKGQTVRLNEALTVVEAGTFEAVGEISTLREILADGHRALVVGHADEERVVWLADPLIAEDLPDGLPEALNDDTRPRKLRPGDSLLVDTKAGYAFERIPKAEVEDLVLEEVPDVSYADIGGLSRQIEQIRDAVELPFLHKELYREYSLRPPKGVLLYGPPGCGKTLIAKAVANSLAKKMAEVRGDDAHEAKSYFLNIKGPELLNKFVGETERHIRLIFQRAREKASEGTPVIVFFDEMDSIFRTRGTGVSSDVETTVVPQLLSEIDGVEGLENVIVIGASNREDMIDPAILRPGRLDVKIKIERPDAEAAQDIYSKYLTEFLPVHADDLAEFDGDRSACIKAMIEKVVDRMYAEIDDNRFLEVTYANGDKEVMYFKDFNSGAMIQNVVDRAKKNAIKSVLETGQPGLRIQHLLDSIVDEFAENEDLPNTTNPDDWARISGKKGERIVYIRTLVTGKSSSASRAIDTESNLGQYL</sequence>
<evidence type="ECO:0000255" key="1">
    <source>
        <dbReference type="HAMAP-Rule" id="MF_02112"/>
    </source>
</evidence>
<evidence type="ECO:0000256" key="2">
    <source>
        <dbReference type="SAM" id="MobiDB-lite"/>
    </source>
</evidence>
<feature type="chain" id="PRO_0000397003" description="Proteasome-associated ATPase">
    <location>
        <begin position="1"/>
        <end position="609"/>
    </location>
</feature>
<feature type="region of interest" description="Disordered" evidence="2">
    <location>
        <begin position="1"/>
        <end position="24"/>
    </location>
</feature>
<feature type="region of interest" description="Docks into pockets in the proteasome alpha-ring" evidence="1">
    <location>
        <begin position="608"/>
        <end position="609"/>
    </location>
</feature>
<feature type="coiled-coil region" evidence="1">
    <location>
        <begin position="20"/>
        <end position="96"/>
    </location>
</feature>
<feature type="binding site" evidence="1">
    <location>
        <begin position="296"/>
        <end position="301"/>
    </location>
    <ligand>
        <name>ATP</name>
        <dbReference type="ChEBI" id="CHEBI:30616"/>
    </ligand>
</feature>
<proteinExistence type="inferred from homology"/>
<keyword id="KW-0067">ATP-binding</keyword>
<keyword id="KW-0143">Chaperone</keyword>
<keyword id="KW-0175">Coiled coil</keyword>
<keyword id="KW-0547">Nucleotide-binding</keyword>
<keyword id="KW-0647">Proteasome</keyword>
<keyword id="KW-1185">Reference proteome</keyword>
<gene>
    <name evidence="1" type="primary">mpa</name>
    <name type="ordered locus">MRA_2130</name>
</gene>
<organism>
    <name type="scientific">Mycobacterium tuberculosis (strain ATCC 25177 / H37Ra)</name>
    <dbReference type="NCBI Taxonomy" id="419947"/>
    <lineage>
        <taxon>Bacteria</taxon>
        <taxon>Bacillati</taxon>
        <taxon>Actinomycetota</taxon>
        <taxon>Actinomycetes</taxon>
        <taxon>Mycobacteriales</taxon>
        <taxon>Mycobacteriaceae</taxon>
        <taxon>Mycobacterium</taxon>
        <taxon>Mycobacterium tuberculosis complex</taxon>
    </lineage>
</organism>
<reference key="1">
    <citation type="journal article" date="2008" name="PLoS ONE">
        <title>Genetic basis of virulence attenuation revealed by comparative genomic analysis of Mycobacterium tuberculosis strain H37Ra versus H37Rv.</title>
        <authorList>
            <person name="Zheng H."/>
            <person name="Lu L."/>
            <person name="Wang B."/>
            <person name="Pu S."/>
            <person name="Zhang X."/>
            <person name="Zhu G."/>
            <person name="Shi W."/>
            <person name="Zhang L."/>
            <person name="Wang H."/>
            <person name="Wang S."/>
            <person name="Zhao G."/>
            <person name="Zhang Y."/>
        </authorList>
    </citation>
    <scope>NUCLEOTIDE SEQUENCE [LARGE SCALE GENOMIC DNA]</scope>
    <source>
        <strain>ATCC 25177 / H37Ra</strain>
    </source>
</reference>
<accession>A5U4E1</accession>